<proteinExistence type="evidence at protein level"/>
<keyword id="KW-1003">Cell membrane</keyword>
<keyword id="KW-0966">Cell projection</keyword>
<keyword id="KW-0217">Developmental protein</keyword>
<keyword id="KW-0436">Ligase</keyword>
<keyword id="KW-0472">Membrane</keyword>
<keyword id="KW-0496">Mitochondrion</keyword>
<keyword id="KW-0524">Neurogenesis</keyword>
<keyword id="KW-0597">Phosphoprotein</keyword>
<keyword id="KW-1185">Reference proteome</keyword>
<keyword id="KW-0770">Synapse</keyword>
<protein>
    <recommendedName>
        <fullName>Disco-interacting protein 2 homolog A</fullName>
        <shortName>DIP2 homolog A</shortName>
        <ecNumber evidence="7">6.2.1.1</ecNumber>
    </recommendedName>
</protein>
<sequence>MADRGCPLEAAPLPAEVLESLAELELELSEGDITQKGYEKKRAKLLARYIPLIQDVHTEAVQAALAKYKERKMPMPSKRRSALVHSSVETYTPPDTSSASEDEGSLRRPGRLTSTLLQSHSGIEPWLDRVIQGSSTSSSASSTSSHPGGRPAAAPSASTALAGLTAHAHIDLHSAPPDVTTGLVEHSSYERPQMASVRGIPRGHGRNVLETADGVPVNSRVSSKIQQLLNTLKRPKRPPLKEFFVDDFEELLEVQQPDPNQPKPEGDQMAVLKGEPLSVGTNGPLSLLAALQLWGTTQPKAPCLTALDTAGKATCTLTYGKLWSRSLKLAYTLLNKLTSKNEPLLNPGDRVALVFPNSDPVMFMVAFYGCLLAELVPVPIEVPLTRKDAGSQQVGFLLGSCGVTLALTTDACQKGLPKAPTGEVATFKGWPPLAWLVIDGKHLTRPPKDWYPLAQDTGSRTAYIEYKTSKEGSTVGVTVSHSSLLAQCQALTQACGYTEAETLTNVLDFKRDAGLWHGVLTSVMNRMHVITIPYALMKVNPLSWIQKVCSYKARAALVKSRDMHWSLLAQRGQRDVCLSSLRMLIVADGANPWSISSCDAFLNVFQSRGLRPEVICPCASSPEALTVAIRRPPDLGGPPPRKAVLSMNGLSYGVIRVDTEEKLSVLTVQDVGQVMPGASVCVVKVDGAPYLCKTDEIGEICVNSVATGTAYYGLLGITKNTFETVPVTADGVPVSDRPFTRTGLLGFIGPDNLVFVVGKLDGLMVVGVRRHNADDIVATALAVEPMKFVYRGRIAVFSVTVLHDDRIVLVAEQRPDASEEDSFQWMSRVLQAIDSIHQVGVYCLALVPANTLPKAPLGGIHISETKQRFLEGTLHPCNVLMCPHTCVTNLPKPRQKQPEVGPASMIVGNLVAGKRIAQASGRELAHLEDSDQARKFLFLADVLQWRAHTTPDHPLFLLLNAKGTVTSTATCIQLHKRAERVAAALMEKGRLDAGDHVALVYPPGVDLIAAFYGCLYCGCVPVTVRPPHPQNLGTTLPTVKMIVEVSKSACVLSTQAITRLLKSKEAAAAVDVRTWPTILDTDDIPKKKVASIFRPPSPDVLAYLDFSVSTTGILAGVKMSHAATSALCRSIKLQCELYPSRQIAICLDPYCGLGFALWCLCSVYSGHQSVLVPPLELESNVSLWLSAVSQYKARVTFCSYSVMEMCTKGLGAQTGALRMKGVNLSCVRTCMVVAEERPRISLTQSFSKLFKDLGLPARAVSTTFGCRVNVAICLQGTTGPDPTTVYVDMRALRHDRVRLVERGSPHSLPLMESGKILPGVKVIIAHTETKGPLGDSHLGEIWVSSPHNATGYYTVYGEETLHADHFSARLSFGDTQTIWARTGYLGFLRRTELTDASGERHDALYVVGSLDETLELRGMRYHPIDIETSVIRAHRSIAECAVFTWTNLLVVVVELDGLEQDALDLVALVTNVVLEEHYLVVGVVVIVDPGVIPINSRGEKQRMHLRDGFLADQLDPIYVAYNM</sequence>
<gene>
    <name type="primary">Dip2a</name>
    <name type="synonym">Dip2</name>
    <name type="synonym">Kiaa0184</name>
</gene>
<organism>
    <name type="scientific">Mus musculus</name>
    <name type="common">Mouse</name>
    <dbReference type="NCBI Taxonomy" id="10090"/>
    <lineage>
        <taxon>Eukaryota</taxon>
        <taxon>Metazoa</taxon>
        <taxon>Chordata</taxon>
        <taxon>Craniata</taxon>
        <taxon>Vertebrata</taxon>
        <taxon>Euteleostomi</taxon>
        <taxon>Mammalia</taxon>
        <taxon>Eutheria</taxon>
        <taxon>Euarchontoglires</taxon>
        <taxon>Glires</taxon>
        <taxon>Rodentia</taxon>
        <taxon>Myomorpha</taxon>
        <taxon>Muroidea</taxon>
        <taxon>Muridae</taxon>
        <taxon>Murinae</taxon>
        <taxon>Mus</taxon>
        <taxon>Mus</taxon>
    </lineage>
</organism>
<feature type="chain" id="PRO_0000079907" description="Disco-interacting protein 2 homolog A">
    <location>
        <begin position="1"/>
        <end position="1523"/>
    </location>
</feature>
<feature type="domain" description="DMAP1-binding" evidence="2">
    <location>
        <begin position="9"/>
        <end position="105"/>
    </location>
</feature>
<feature type="region of interest" description="Disordered" evidence="3">
    <location>
        <begin position="72"/>
        <end position="110"/>
    </location>
</feature>
<feature type="region of interest" description="Disordered" evidence="3">
    <location>
        <begin position="132"/>
        <end position="158"/>
    </location>
</feature>
<feature type="short sequence motif" description="PXXP motif; required for interaction with CTTN" evidence="8">
    <location>
        <begin position="235"/>
        <end position="238"/>
    </location>
</feature>
<feature type="short sequence motif" description="PXXP motif; required for interaction with CTTN" evidence="8">
    <location>
        <begin position="259"/>
        <end position="262"/>
    </location>
</feature>
<feature type="compositionally biased region" description="Polar residues" evidence="3">
    <location>
        <begin position="87"/>
        <end position="99"/>
    </location>
</feature>
<feature type="compositionally biased region" description="Low complexity" evidence="3">
    <location>
        <begin position="134"/>
        <end position="158"/>
    </location>
</feature>
<feature type="modified residue" description="Phosphothreonine" evidence="10">
    <location>
        <position position="92"/>
    </location>
</feature>
<feature type="modified residue" description="Phosphothreonine" evidence="1">
    <location>
        <position position="115"/>
    </location>
</feature>
<feature type="mutagenesis site" description="Significantly reduced interaction with CTTN; when associated with 259-ANQA-262." evidence="8">
    <original>PKRP</original>
    <variation>AKRA</variation>
    <location>
        <begin position="235"/>
        <end position="238"/>
    </location>
</feature>
<feature type="mutagenesis site" description="Significantly reduced interaction with CTTN; when associated with 235-AKRA-238." evidence="8">
    <original>PNQP</original>
    <variation>ANQA</variation>
    <location>
        <begin position="259"/>
        <end position="262"/>
    </location>
</feature>
<feature type="sequence conflict" description="In Ref. 3; BAC41397." evidence="9" ref="3">
    <original>RAKLLARYIPLIQ</original>
    <variation>SRATNSRDERFRS</variation>
    <location>
        <begin position="42"/>
        <end position="54"/>
    </location>
</feature>
<feature type="sequence conflict" description="In Ref. 2; BAC34043." evidence="9" ref="2">
    <original>H</original>
    <variation>R</variation>
    <location>
        <position position="996"/>
    </location>
</feature>
<evidence type="ECO:0000250" key="1">
    <source>
        <dbReference type="UniProtKB" id="Q14689"/>
    </source>
</evidence>
<evidence type="ECO:0000255" key="2">
    <source>
        <dbReference type="PROSITE-ProRule" id="PRU01260"/>
    </source>
</evidence>
<evidence type="ECO:0000256" key="3">
    <source>
        <dbReference type="SAM" id="MobiDB-lite"/>
    </source>
</evidence>
<evidence type="ECO:0000269" key="4">
    <source>
    </source>
</evidence>
<evidence type="ECO:0000269" key="5">
    <source>
    </source>
</evidence>
<evidence type="ECO:0000269" key="6">
    <source>
    </source>
</evidence>
<evidence type="ECO:0000269" key="7">
    <source>
    </source>
</evidence>
<evidence type="ECO:0000269" key="8">
    <source>
    </source>
</evidence>
<evidence type="ECO:0000305" key="9"/>
<evidence type="ECO:0007744" key="10">
    <source>
    </source>
</evidence>
<accession>Q8BWT5</accession>
<accession>E0CXM7</accession>
<accession>Q8CHI0</accession>
<reference key="1">
    <citation type="journal article" date="2009" name="PLoS Biol.">
        <title>Lineage-specific biology revealed by a finished genome assembly of the mouse.</title>
        <authorList>
            <person name="Church D.M."/>
            <person name="Goodstadt L."/>
            <person name="Hillier L.W."/>
            <person name="Zody M.C."/>
            <person name="Goldstein S."/>
            <person name="She X."/>
            <person name="Bult C.J."/>
            <person name="Agarwala R."/>
            <person name="Cherry J.L."/>
            <person name="DiCuccio M."/>
            <person name="Hlavina W."/>
            <person name="Kapustin Y."/>
            <person name="Meric P."/>
            <person name="Maglott D."/>
            <person name="Birtle Z."/>
            <person name="Marques A.C."/>
            <person name="Graves T."/>
            <person name="Zhou S."/>
            <person name="Teague B."/>
            <person name="Potamousis K."/>
            <person name="Churas C."/>
            <person name="Place M."/>
            <person name="Herschleb J."/>
            <person name="Runnheim R."/>
            <person name="Forrest D."/>
            <person name="Amos-Landgraf J."/>
            <person name="Schwartz D.C."/>
            <person name="Cheng Z."/>
            <person name="Lindblad-Toh K."/>
            <person name="Eichler E.E."/>
            <person name="Ponting C.P."/>
        </authorList>
    </citation>
    <scope>NUCLEOTIDE SEQUENCE [LARGE SCALE GENOMIC DNA]</scope>
    <source>
        <strain>C57BL/6J</strain>
    </source>
</reference>
<reference key="2">
    <citation type="journal article" date="2005" name="Science">
        <title>The transcriptional landscape of the mammalian genome.</title>
        <authorList>
            <person name="Carninci P."/>
            <person name="Kasukawa T."/>
            <person name="Katayama S."/>
            <person name="Gough J."/>
            <person name="Frith M.C."/>
            <person name="Maeda N."/>
            <person name="Oyama R."/>
            <person name="Ravasi T."/>
            <person name="Lenhard B."/>
            <person name="Wells C."/>
            <person name="Kodzius R."/>
            <person name="Shimokawa K."/>
            <person name="Bajic V.B."/>
            <person name="Brenner S.E."/>
            <person name="Batalov S."/>
            <person name="Forrest A.R."/>
            <person name="Zavolan M."/>
            <person name="Davis M.J."/>
            <person name="Wilming L.G."/>
            <person name="Aidinis V."/>
            <person name="Allen J.E."/>
            <person name="Ambesi-Impiombato A."/>
            <person name="Apweiler R."/>
            <person name="Aturaliya R.N."/>
            <person name="Bailey T.L."/>
            <person name="Bansal M."/>
            <person name="Baxter L."/>
            <person name="Beisel K.W."/>
            <person name="Bersano T."/>
            <person name="Bono H."/>
            <person name="Chalk A.M."/>
            <person name="Chiu K.P."/>
            <person name="Choudhary V."/>
            <person name="Christoffels A."/>
            <person name="Clutterbuck D.R."/>
            <person name="Crowe M.L."/>
            <person name="Dalla E."/>
            <person name="Dalrymple B.P."/>
            <person name="de Bono B."/>
            <person name="Della Gatta G."/>
            <person name="di Bernardo D."/>
            <person name="Down T."/>
            <person name="Engstrom P."/>
            <person name="Fagiolini M."/>
            <person name="Faulkner G."/>
            <person name="Fletcher C.F."/>
            <person name="Fukushima T."/>
            <person name="Furuno M."/>
            <person name="Futaki S."/>
            <person name="Gariboldi M."/>
            <person name="Georgii-Hemming P."/>
            <person name="Gingeras T.R."/>
            <person name="Gojobori T."/>
            <person name="Green R.E."/>
            <person name="Gustincich S."/>
            <person name="Harbers M."/>
            <person name="Hayashi Y."/>
            <person name="Hensch T.K."/>
            <person name="Hirokawa N."/>
            <person name="Hill D."/>
            <person name="Huminiecki L."/>
            <person name="Iacono M."/>
            <person name="Ikeo K."/>
            <person name="Iwama A."/>
            <person name="Ishikawa T."/>
            <person name="Jakt M."/>
            <person name="Kanapin A."/>
            <person name="Katoh M."/>
            <person name="Kawasawa Y."/>
            <person name="Kelso J."/>
            <person name="Kitamura H."/>
            <person name="Kitano H."/>
            <person name="Kollias G."/>
            <person name="Krishnan S.P."/>
            <person name="Kruger A."/>
            <person name="Kummerfeld S.K."/>
            <person name="Kurochkin I.V."/>
            <person name="Lareau L.F."/>
            <person name="Lazarevic D."/>
            <person name="Lipovich L."/>
            <person name="Liu J."/>
            <person name="Liuni S."/>
            <person name="McWilliam S."/>
            <person name="Madan Babu M."/>
            <person name="Madera M."/>
            <person name="Marchionni L."/>
            <person name="Matsuda H."/>
            <person name="Matsuzawa S."/>
            <person name="Miki H."/>
            <person name="Mignone F."/>
            <person name="Miyake S."/>
            <person name="Morris K."/>
            <person name="Mottagui-Tabar S."/>
            <person name="Mulder N."/>
            <person name="Nakano N."/>
            <person name="Nakauchi H."/>
            <person name="Ng P."/>
            <person name="Nilsson R."/>
            <person name="Nishiguchi S."/>
            <person name="Nishikawa S."/>
            <person name="Nori F."/>
            <person name="Ohara O."/>
            <person name="Okazaki Y."/>
            <person name="Orlando V."/>
            <person name="Pang K.C."/>
            <person name="Pavan W.J."/>
            <person name="Pavesi G."/>
            <person name="Pesole G."/>
            <person name="Petrovsky N."/>
            <person name="Piazza S."/>
            <person name="Reed J."/>
            <person name="Reid J.F."/>
            <person name="Ring B.Z."/>
            <person name="Ringwald M."/>
            <person name="Rost B."/>
            <person name="Ruan Y."/>
            <person name="Salzberg S.L."/>
            <person name="Sandelin A."/>
            <person name="Schneider C."/>
            <person name="Schoenbach C."/>
            <person name="Sekiguchi K."/>
            <person name="Semple C.A."/>
            <person name="Seno S."/>
            <person name="Sessa L."/>
            <person name="Sheng Y."/>
            <person name="Shibata Y."/>
            <person name="Shimada H."/>
            <person name="Shimada K."/>
            <person name="Silva D."/>
            <person name="Sinclair B."/>
            <person name="Sperling S."/>
            <person name="Stupka E."/>
            <person name="Sugiura K."/>
            <person name="Sultana R."/>
            <person name="Takenaka Y."/>
            <person name="Taki K."/>
            <person name="Tammoja K."/>
            <person name="Tan S.L."/>
            <person name="Tang S."/>
            <person name="Taylor M.S."/>
            <person name="Tegner J."/>
            <person name="Teichmann S.A."/>
            <person name="Ueda H.R."/>
            <person name="van Nimwegen E."/>
            <person name="Verardo R."/>
            <person name="Wei C.L."/>
            <person name="Yagi K."/>
            <person name="Yamanishi H."/>
            <person name="Zabarovsky E."/>
            <person name="Zhu S."/>
            <person name="Zimmer A."/>
            <person name="Hide W."/>
            <person name="Bult C."/>
            <person name="Grimmond S.M."/>
            <person name="Teasdale R.D."/>
            <person name="Liu E.T."/>
            <person name="Brusic V."/>
            <person name="Quackenbush J."/>
            <person name="Wahlestedt C."/>
            <person name="Mattick J.S."/>
            <person name="Hume D.A."/>
            <person name="Kai C."/>
            <person name="Sasaki D."/>
            <person name="Tomaru Y."/>
            <person name="Fukuda S."/>
            <person name="Kanamori-Katayama M."/>
            <person name="Suzuki M."/>
            <person name="Aoki J."/>
            <person name="Arakawa T."/>
            <person name="Iida J."/>
            <person name="Imamura K."/>
            <person name="Itoh M."/>
            <person name="Kato T."/>
            <person name="Kawaji H."/>
            <person name="Kawagashira N."/>
            <person name="Kawashima T."/>
            <person name="Kojima M."/>
            <person name="Kondo S."/>
            <person name="Konno H."/>
            <person name="Nakano K."/>
            <person name="Ninomiya N."/>
            <person name="Nishio T."/>
            <person name="Okada M."/>
            <person name="Plessy C."/>
            <person name="Shibata K."/>
            <person name="Shiraki T."/>
            <person name="Suzuki S."/>
            <person name="Tagami M."/>
            <person name="Waki K."/>
            <person name="Watahiki A."/>
            <person name="Okamura-Oho Y."/>
            <person name="Suzuki H."/>
            <person name="Kawai J."/>
            <person name="Hayashizaki Y."/>
        </authorList>
    </citation>
    <scope>NUCLEOTIDE SEQUENCE [LARGE SCALE MRNA] OF 1-1085</scope>
    <source>
        <strain>C57BL/6J</strain>
        <tissue>Liver</tissue>
    </source>
</reference>
<reference key="3">
    <citation type="journal article" date="2002" name="DNA Res.">
        <title>Prediction of the coding sequences of mouse homologues of KIAA gene: I. The complete nucleotide sequences of 100 mouse KIAA-homologous cDNAs identified by screening of terminal sequences of cDNA clones randomly sampled from size-fractionated libraries.</title>
        <authorList>
            <person name="Okazaki N."/>
            <person name="Kikuno R."/>
            <person name="Ohara R."/>
            <person name="Inamoto S."/>
            <person name="Hara Y."/>
            <person name="Nagase T."/>
            <person name="Ohara O."/>
            <person name="Koga H."/>
        </authorList>
    </citation>
    <scope>NUCLEOTIDE SEQUENCE [LARGE SCALE MRNA] OF 41-1523</scope>
    <source>
        <tissue>Brain</tissue>
    </source>
</reference>
<reference key="4">
    <citation type="submission" date="2003-02" db="EMBL/GenBank/DDBJ databases">
        <authorList>
            <person name="Okazaki N."/>
            <person name="Kikuno R."/>
            <person name="Nagase T."/>
            <person name="Ohara O."/>
            <person name="Koga H."/>
        </authorList>
    </citation>
    <scope>SEQUENCE REVISION</scope>
</reference>
<reference key="5">
    <citation type="journal article" date="2002" name="Gene">
        <title>Cloning, genomic organization and expression pattern of a novel Drosophila gene, the disco-interacting protein 2 (dip2), and its murine homolog.</title>
        <authorList>
            <person name="Mukhopadhyay M."/>
            <person name="Pelka P."/>
            <person name="DeSousa D."/>
            <person name="Kablar B."/>
            <person name="Schindler A."/>
            <person name="Rudnicki M.A."/>
            <person name="Campos A.R."/>
        </authorList>
    </citation>
    <scope>TISSUE SPECIFICITY</scope>
    <scope>DEVELOPMENTAL STAGE</scope>
</reference>
<reference key="6">
    <citation type="journal article" date="2010" name="Cell">
        <title>A tissue-specific atlas of mouse protein phosphorylation and expression.</title>
        <authorList>
            <person name="Huttlin E.L."/>
            <person name="Jedrychowski M.P."/>
            <person name="Elias J.E."/>
            <person name="Goswami T."/>
            <person name="Rad R."/>
            <person name="Beausoleil S.A."/>
            <person name="Villen J."/>
            <person name="Haas W."/>
            <person name="Sowa M.E."/>
            <person name="Gygi S.P."/>
        </authorList>
    </citation>
    <scope>PHOSPHORYLATION [LARGE SCALE ANALYSIS] AT THR-92</scope>
    <scope>IDENTIFICATION BY MASS SPECTROMETRY [LARGE SCALE ANALYSIS]</scope>
    <source>
        <tissue>Brain</tissue>
        <tissue>Brown adipose tissue</tissue>
        <tissue>Kidney</tissue>
        <tissue>Lung</tissue>
    </source>
</reference>
<reference key="7">
    <citation type="journal article" date="2010" name="J. Biol. Chem.">
        <title>DIP2A functions as a FSTL1 receptor.</title>
        <authorList>
            <person name="Ouchi N."/>
            <person name="Asaumi Y."/>
            <person name="Ohashi K."/>
            <person name="Higuchi A."/>
            <person name="Sono-Romanelli S."/>
            <person name="Oshima Y."/>
            <person name="Walsh K."/>
        </authorList>
    </citation>
    <scope>INTERACTION WITH FSTL1</scope>
</reference>
<reference key="8">
    <citation type="journal article" date="2015" name="PLoS ONE">
        <title>Expression Patterns and Potential Biological Roles of Dip2a.</title>
        <authorList>
            <person name="Zhang L."/>
            <person name="Mabwi H.A."/>
            <person name="Palange N.J."/>
            <person name="Jia R."/>
            <person name="Ma J."/>
            <person name="Bah F.B."/>
            <person name="Sah R.K."/>
            <person name="Li D."/>
            <person name="Wang D."/>
            <person name="Bah F.B."/>
            <person name="Togo J."/>
            <person name="Jin H."/>
            <person name="Ban L."/>
            <person name="Feng X."/>
            <person name="Zheng Y."/>
        </authorList>
    </citation>
    <scope>TISSUE SPECIFICITY</scope>
</reference>
<reference key="9">
    <citation type="journal article" date="2019" name="Cell Biol. Int.">
        <title>Functional prediction and characterization of Dip2 gene in mice.</title>
        <authorList>
            <person name="Ma J."/>
            <person name="Chen L."/>
            <person name="He X.X."/>
            <person name="Wang Y.J."/>
            <person name="Yu H.L."/>
            <person name="He Z.X."/>
            <person name="Zhang L.Q."/>
            <person name="Zheng Y.W."/>
            <person name="Zhu X.J."/>
        </authorList>
    </citation>
    <scope>FUNCTION</scope>
    <scope>CATALYTIC ACTIVITY</scope>
    <scope>SUBCELLULAR LOCATION</scope>
    <scope>TISSUE SPECIFICITY</scope>
</reference>
<reference key="10">
    <citation type="journal article" date="2019" name="PLoS Biol.">
        <title>Autism candidate gene DIP2A regulates spine morphogenesis via acetylation of cortactin.</title>
        <authorList>
            <person name="Ma J."/>
            <person name="Zhang L.Q."/>
            <person name="He Z.X."/>
            <person name="He X.X."/>
            <person name="Wang Y.J."/>
            <person name="Jian Y.L."/>
            <person name="Wang X."/>
            <person name="Zhang B.B."/>
            <person name="Su C."/>
            <person name="Lu J."/>
            <person name="Huang B.Q."/>
            <person name="Zhang Y."/>
            <person name="Wang G.Y."/>
            <person name="Guo W.X."/>
            <person name="Qiu D.L."/>
            <person name="Mei L."/>
            <person name="Xiong W.C."/>
            <person name="Zheng Y.W."/>
            <person name="Zhu X.J."/>
        </authorList>
    </citation>
    <scope>FUNCTION</scope>
    <scope>INTERACTION WITH CTTN AND SHANK3</scope>
    <scope>SUBCELLULAR LOCATION</scope>
    <scope>TISSUE SPECIFICITY</scope>
    <scope>DEVELOPMENTAL STAGE</scope>
    <scope>DISRUPTION PHENOTYPE</scope>
    <scope>MUTAGENESIS OF 235-PRO--PRO-238 AND 259-PRO--PRO-262</scope>
</reference>
<name>DIP2A_MOUSE</name>
<dbReference type="EC" id="6.2.1.1" evidence="7"/>
<dbReference type="EMBL" id="AC140851">
    <property type="status" value="NOT_ANNOTATED_CDS"/>
    <property type="molecule type" value="Genomic_DNA"/>
</dbReference>
<dbReference type="EMBL" id="AC141477">
    <property type="status" value="NOT_ANNOTATED_CDS"/>
    <property type="molecule type" value="Genomic_DNA"/>
</dbReference>
<dbReference type="EMBL" id="AK050040">
    <property type="protein sequence ID" value="BAC34043.2"/>
    <property type="molecule type" value="mRNA"/>
</dbReference>
<dbReference type="EMBL" id="AB093213">
    <property type="protein sequence ID" value="BAC41397.2"/>
    <property type="molecule type" value="mRNA"/>
</dbReference>
<dbReference type="RefSeq" id="NP_001074888.2">
    <property type="nucleotide sequence ID" value="NM_001081419.2"/>
</dbReference>
<dbReference type="SMR" id="Q8BWT5"/>
<dbReference type="BioGRID" id="211079">
    <property type="interactions" value="1"/>
</dbReference>
<dbReference type="FunCoup" id="Q8BWT5">
    <property type="interactions" value="2390"/>
</dbReference>
<dbReference type="STRING" id="10090.ENSMUSP00000043710"/>
<dbReference type="iPTMnet" id="Q8BWT5"/>
<dbReference type="PhosphoSitePlus" id="Q8BWT5"/>
<dbReference type="PaxDb" id="10090-ENSMUSP00000101057"/>
<dbReference type="PeptideAtlas" id="Q8BWT5"/>
<dbReference type="ProteomicsDB" id="279414"/>
<dbReference type="Pumba" id="Q8BWT5"/>
<dbReference type="Antibodypedia" id="24717">
    <property type="antibodies" value="145 antibodies from 20 providers"/>
</dbReference>
<dbReference type="Ensembl" id="ENSMUST00000160048.8">
    <property type="protein sequence ID" value="ENSMUSP00000125184.2"/>
    <property type="gene ID" value="ENSMUSG00000020231.16"/>
</dbReference>
<dbReference type="GeneID" id="64451"/>
<dbReference type="KEGG" id="mmu:64451"/>
<dbReference type="AGR" id="MGI:2385920"/>
<dbReference type="CTD" id="23181"/>
<dbReference type="MGI" id="MGI:2385920">
    <property type="gene designation" value="Dip2a"/>
</dbReference>
<dbReference type="VEuPathDB" id="HostDB:ENSMUSG00000020231"/>
<dbReference type="eggNOG" id="KOG3628">
    <property type="taxonomic scope" value="Eukaryota"/>
</dbReference>
<dbReference type="GeneTree" id="ENSGT00950000182997"/>
<dbReference type="HOGENOM" id="CLU_001345_0_0_1"/>
<dbReference type="InParanoid" id="Q8BWT5"/>
<dbReference type="BioGRID-ORCS" id="64451">
    <property type="hits" value="9 hits in 79 CRISPR screens"/>
</dbReference>
<dbReference type="ChiTaRS" id="Dip2a">
    <property type="organism name" value="mouse"/>
</dbReference>
<dbReference type="PRO" id="PR:Q8BWT5"/>
<dbReference type="Proteomes" id="UP000000589">
    <property type="component" value="Chromosome 10"/>
</dbReference>
<dbReference type="RNAct" id="Q8BWT5">
    <property type="molecule type" value="protein"/>
</dbReference>
<dbReference type="Bgee" id="ENSMUSG00000020231">
    <property type="expression patterns" value="Expressed in substantia nigra and 230 other cell types or tissues"/>
</dbReference>
<dbReference type="ExpressionAtlas" id="Q8BWT5">
    <property type="expression patterns" value="baseline and differential"/>
</dbReference>
<dbReference type="GO" id="GO:0009986">
    <property type="term" value="C:cell surface"/>
    <property type="evidence" value="ECO:0000250"/>
    <property type="project" value="UniProtKB"/>
</dbReference>
<dbReference type="GO" id="GO:0043197">
    <property type="term" value="C:dendritic spine"/>
    <property type="evidence" value="ECO:0000314"/>
    <property type="project" value="UniProtKB"/>
</dbReference>
<dbReference type="GO" id="GO:0098978">
    <property type="term" value="C:glutamatergic synapse"/>
    <property type="evidence" value="ECO:0000314"/>
    <property type="project" value="SynGO"/>
</dbReference>
<dbReference type="GO" id="GO:0016020">
    <property type="term" value="C:membrane"/>
    <property type="evidence" value="ECO:0000250"/>
    <property type="project" value="UniProtKB"/>
</dbReference>
<dbReference type="GO" id="GO:0005739">
    <property type="term" value="C:mitochondrion"/>
    <property type="evidence" value="ECO:0000314"/>
    <property type="project" value="UniProtKB"/>
</dbReference>
<dbReference type="GO" id="GO:0005886">
    <property type="term" value="C:plasma membrane"/>
    <property type="evidence" value="ECO:0007669"/>
    <property type="project" value="UniProtKB-SubCell"/>
</dbReference>
<dbReference type="GO" id="GO:0098794">
    <property type="term" value="C:postsynapse"/>
    <property type="evidence" value="ECO:0000314"/>
    <property type="project" value="SynGO"/>
</dbReference>
<dbReference type="GO" id="GO:0003987">
    <property type="term" value="F:acetate-CoA ligase activity"/>
    <property type="evidence" value="ECO:0000314"/>
    <property type="project" value="FlyBase"/>
</dbReference>
<dbReference type="GO" id="GO:0006085">
    <property type="term" value="P:acetyl-CoA biosynthetic process"/>
    <property type="evidence" value="ECO:0000314"/>
    <property type="project" value="UniProtKB"/>
</dbReference>
<dbReference type="GO" id="GO:0060997">
    <property type="term" value="P:dendritic spine morphogenesis"/>
    <property type="evidence" value="ECO:0000315"/>
    <property type="project" value="UniProtKB"/>
</dbReference>
<dbReference type="GO" id="GO:2000758">
    <property type="term" value="P:positive regulation of peptidyl-lysine acetylation"/>
    <property type="evidence" value="ECO:0000315"/>
    <property type="project" value="UniProtKB"/>
</dbReference>
<dbReference type="GO" id="GO:1905274">
    <property type="term" value="P:regulation of modification of postsynaptic actin cytoskeleton"/>
    <property type="evidence" value="ECO:0000314"/>
    <property type="project" value="SynGO"/>
</dbReference>
<dbReference type="CDD" id="cd05905">
    <property type="entry name" value="Dip2"/>
    <property type="match status" value="2"/>
</dbReference>
<dbReference type="FunFam" id="3.30.300.30:FF:000003">
    <property type="entry name" value="DIP2 disco-interacting protein 2 homolog A"/>
    <property type="match status" value="1"/>
</dbReference>
<dbReference type="FunFam" id="3.30.300.30:FF:000001">
    <property type="entry name" value="DIP2 disco-interacting protein 2 homolog C"/>
    <property type="match status" value="1"/>
</dbReference>
<dbReference type="FunFam" id="3.40.50.12780:FF:000004">
    <property type="entry name" value="Disco interacting protein 2 homolog A"/>
    <property type="match status" value="1"/>
</dbReference>
<dbReference type="FunFam" id="3.40.50.12780:FF:000002">
    <property type="entry name" value="Disco interacting protein 2 homolog B"/>
    <property type="match status" value="1"/>
</dbReference>
<dbReference type="Gene3D" id="3.30.300.30">
    <property type="match status" value="2"/>
</dbReference>
<dbReference type="Gene3D" id="3.40.50.12780">
    <property type="entry name" value="N-terminal domain of ligase-like"/>
    <property type="match status" value="2"/>
</dbReference>
<dbReference type="InterPro" id="IPR025110">
    <property type="entry name" value="AMP-bd_C"/>
</dbReference>
<dbReference type="InterPro" id="IPR045851">
    <property type="entry name" value="AMP-bd_C_sf"/>
</dbReference>
<dbReference type="InterPro" id="IPR000873">
    <property type="entry name" value="AMP-dep_synth/lig_dom"/>
</dbReference>
<dbReference type="InterPro" id="IPR042099">
    <property type="entry name" value="ANL_N_sf"/>
</dbReference>
<dbReference type="InterPro" id="IPR037337">
    <property type="entry name" value="Dip2-like_dom"/>
</dbReference>
<dbReference type="InterPro" id="IPR010506">
    <property type="entry name" value="DMAP1-bd"/>
</dbReference>
<dbReference type="PANTHER" id="PTHR22754">
    <property type="entry name" value="DISCO-INTERACTING PROTEIN 2 DIP2 -RELATED"/>
    <property type="match status" value="1"/>
</dbReference>
<dbReference type="PANTHER" id="PTHR22754:SF34">
    <property type="entry name" value="DISCO-INTERACTING PROTEIN 2 HOMOLOG A"/>
    <property type="match status" value="1"/>
</dbReference>
<dbReference type="Pfam" id="PF00501">
    <property type="entry name" value="AMP-binding"/>
    <property type="match status" value="2"/>
</dbReference>
<dbReference type="Pfam" id="PF23024">
    <property type="entry name" value="AMP-dom_DIP2-like"/>
    <property type="match status" value="1"/>
</dbReference>
<dbReference type="Pfam" id="PF06464">
    <property type="entry name" value="DMAP_binding"/>
    <property type="match status" value="1"/>
</dbReference>
<dbReference type="SMART" id="SM01137">
    <property type="entry name" value="DMAP_binding"/>
    <property type="match status" value="1"/>
</dbReference>
<dbReference type="SUPFAM" id="SSF56801">
    <property type="entry name" value="Acetyl-CoA synthetase-like"/>
    <property type="match status" value="2"/>
</dbReference>
<dbReference type="PROSITE" id="PS51912">
    <property type="entry name" value="DMAP1_BIND"/>
    <property type="match status" value="1"/>
</dbReference>
<comment type="function">
    <text evidence="1 7 8">Catalyzes the de novo synthesis of acetyl-CoA in vitro (PubMed:30672040). Promotes acetylation of CTTN, possibly by providing the acetyl donor, ensuring correct dendritic spine morphology and synaptic transmission (PubMed:31600191). Binds to follistatin-related protein FSTL1 and may act as a cell surface receptor for FSTL1, contributing to AKT activation and subsequent FSTL1-induced survival and function of endothelial cells and cardiac myocytes (By similarity).</text>
</comment>
<comment type="catalytic activity">
    <reaction evidence="7">
        <text>acetate + ATP + CoA = acetyl-CoA + AMP + diphosphate</text>
        <dbReference type="Rhea" id="RHEA:23176"/>
        <dbReference type="ChEBI" id="CHEBI:30089"/>
        <dbReference type="ChEBI" id="CHEBI:30616"/>
        <dbReference type="ChEBI" id="CHEBI:33019"/>
        <dbReference type="ChEBI" id="CHEBI:57287"/>
        <dbReference type="ChEBI" id="CHEBI:57288"/>
        <dbReference type="ChEBI" id="CHEBI:456215"/>
        <dbReference type="EC" id="6.2.1.1"/>
    </reaction>
</comment>
<comment type="subunit">
    <text evidence="5 8">Interacts with FSTL1; DIP2A may act as a cell surface receptor for FSTL1 (PubMed:20054002). Interacts (via N-terminus) with CTTN (via SH3 domain); the interaction promotes acetylation of CTTN and is required for proper synaptic transmission (PubMed:31600191). Interacts with SHANK3 (PubMed:31600191).</text>
</comment>
<comment type="subcellular location">
    <subcellularLocation>
        <location evidence="1">Cell membrane</location>
        <topology evidence="9">Peripheral membrane protein</topology>
    </subcellularLocation>
    <subcellularLocation>
        <location evidence="7">Mitochondrion</location>
    </subcellularLocation>
    <subcellularLocation>
        <location evidence="8">Cell projection</location>
        <location evidence="8">Dendritic spine</location>
    </subcellularLocation>
</comment>
<comment type="tissue specificity">
    <text evidence="4 6 7 8">Detected in heart, liver, spleen, lung, kidney and brain with highest levels in brain (at protein level) (PubMed:30672040). In adult cortex, preferentially expressed in excitatory neurons (PubMed:31600191). Broadly expressed in neuronal, reproductive and vascular tissues as well as in heart, kidney, liver and lung with expression detected in neurons, mesenchyme, endothelium, smooth muscle cells and cardiomyocytes (PubMed:26605542). Expressed in ectoderm-derived tissues in the developing embryo (PubMed:26605542). Expressed in the developing nervous system (PubMed:12137943).</text>
</comment>
<comment type="developmental stage">
    <text evidence="4 8">In brain, expressed from embryo to adult with a constant increase during postnatal development in the cerebral cortex (at protein level) (PubMed:31600191). Expressed at all stages of embryonic development, including 7 dpc, 11 dpc, 15 dpc and 17 dpc (PubMed:12137943). Higher level of expression is seen at later stages of embryonic development (PubMed:12137943). In 9.5 dpc embryos, expression is diffusely distributed in the regions of the brain, optic vesicles, otic vesicles, cervical and upper thoracic segments of the spinal cord (PubMed:12137943). The expression is more intense in the dorsal portions of the central nervous system (CNS) (PubMed:12137943). In the brain, expression is localized in prosencephalon, mesencephalon and rhombencephalon (PubMed:12137943). In 10.5 embryos, expression area is more restricted, but still within the CNS and the sense organs. The spinal cord expression disappears (PubMed:12137943).</text>
</comment>
<comment type="disruption phenotype">
    <text evidence="8">Defects in dendritic spine morphogenesis along with thin postsynaptic density and reduced synaptic transmission of pyramidal neurons (PubMed:31600191). Reduced postsynaptic density protein levels of Grin1/Nmdar1, Grin2a/NR2A, Grin2b/NR2B and Gria1/GluR1 (PubMed:31600191). Significantly reduced acetylation of Cttn (PubMed:31600191). Autism-like behaviors including excessive repetitive self-grooming, reduced vocalization time and impaired social interaction (PubMed:31600191).</text>
</comment>
<comment type="similarity">
    <text evidence="9">Belongs to the DIP2 family.</text>
</comment>